<keyword id="KW-0119">Carbohydrate metabolism</keyword>
<keyword id="KW-0963">Cytoplasm</keyword>
<keyword id="KW-0378">Hydrolase</keyword>
<keyword id="KW-0448">Lipopolysaccharide biosynthesis</keyword>
<keyword id="KW-0460">Magnesium</keyword>
<keyword id="KW-0479">Metal-binding</keyword>
<keyword id="KW-1185">Reference proteome</keyword>
<keyword id="KW-0862">Zinc</keyword>
<accession>Q9CK98</accession>
<organism>
    <name type="scientific">Pasteurella multocida (strain Pm70)</name>
    <dbReference type="NCBI Taxonomy" id="272843"/>
    <lineage>
        <taxon>Bacteria</taxon>
        <taxon>Pseudomonadati</taxon>
        <taxon>Pseudomonadota</taxon>
        <taxon>Gammaproteobacteria</taxon>
        <taxon>Pasteurellales</taxon>
        <taxon>Pasteurellaceae</taxon>
        <taxon>Pasteurella</taxon>
    </lineage>
</organism>
<proteinExistence type="inferred from homology"/>
<feature type="chain" id="PRO_0000209400" description="D-glycero-beta-D-manno-heptose-1,7-bisphosphate 7-phosphatase">
    <location>
        <begin position="1"/>
        <end position="184"/>
    </location>
</feature>
<feature type="active site" description="Nucleophile" evidence="1">
    <location>
        <position position="8"/>
    </location>
</feature>
<feature type="active site" description="Proton donor" evidence="1">
    <location>
        <position position="10"/>
    </location>
</feature>
<feature type="binding site" evidence="1">
    <location>
        <begin position="8"/>
        <end position="10"/>
    </location>
    <ligand>
        <name>substrate</name>
    </ligand>
</feature>
<feature type="binding site" evidence="2">
    <location>
        <position position="8"/>
    </location>
    <ligand>
        <name>Mg(2+)</name>
        <dbReference type="ChEBI" id="CHEBI:18420"/>
    </ligand>
</feature>
<feature type="binding site" evidence="2">
    <location>
        <position position="10"/>
    </location>
    <ligand>
        <name>Mg(2+)</name>
        <dbReference type="ChEBI" id="CHEBI:18420"/>
    </ligand>
</feature>
<feature type="binding site" evidence="1">
    <location>
        <begin position="16"/>
        <end position="19"/>
    </location>
    <ligand>
        <name>substrate</name>
    </ligand>
</feature>
<feature type="binding site" evidence="1">
    <location>
        <begin position="50"/>
        <end position="53"/>
    </location>
    <ligand>
        <name>substrate</name>
    </ligand>
</feature>
<feature type="binding site" evidence="2">
    <location>
        <position position="89"/>
    </location>
    <ligand>
        <name>Zn(2+)</name>
        <dbReference type="ChEBI" id="CHEBI:29105"/>
    </ligand>
</feature>
<feature type="binding site" evidence="2">
    <location>
        <position position="91"/>
    </location>
    <ligand>
        <name>Zn(2+)</name>
        <dbReference type="ChEBI" id="CHEBI:29105"/>
    </ligand>
</feature>
<feature type="binding site" evidence="2">
    <location>
        <position position="103"/>
    </location>
    <ligand>
        <name>Zn(2+)</name>
        <dbReference type="ChEBI" id="CHEBI:29105"/>
    </ligand>
</feature>
<feature type="binding site" evidence="2">
    <location>
        <position position="105"/>
    </location>
    <ligand>
        <name>Zn(2+)</name>
        <dbReference type="ChEBI" id="CHEBI:29105"/>
    </ligand>
</feature>
<feature type="binding site" evidence="1">
    <location>
        <begin position="106"/>
        <end position="107"/>
    </location>
    <ligand>
        <name>substrate</name>
    </ligand>
</feature>
<feature type="binding site" evidence="2">
    <location>
        <position position="132"/>
    </location>
    <ligand>
        <name>Mg(2+)</name>
        <dbReference type="ChEBI" id="CHEBI:18420"/>
    </ligand>
</feature>
<feature type="binding site" evidence="1">
    <location>
        <position position="133"/>
    </location>
    <ligand>
        <name>substrate</name>
    </ligand>
</feature>
<feature type="site" description="Stabilizes the phosphoryl group" evidence="1">
    <location>
        <position position="50"/>
    </location>
</feature>
<feature type="site" description="Contributes to substrate recognition" evidence="1">
    <location>
        <position position="106"/>
    </location>
</feature>
<feature type="site" description="Stabilizes the phosphoryl group" evidence="1">
    <location>
        <position position="107"/>
    </location>
</feature>
<sequence length="184" mass="20618">MKKAIFLDRDGTLNIDHGYVHEIDQFQFIDGSIEALQQLKAMGYLLVLVTNQSGIARGYFSEDQFLQLTEWMDWSLADRGVDLDGIYYCPHHTEGKGEYCQDCDCRKPKPGMLLQAIKELNIDPNTSFMVGDKVEDMLAGKGAKIKNTVLVKTGKPITEDGKKQANYVLESIADLPKLIKGLKS</sequence>
<dbReference type="EC" id="3.1.3.82"/>
<dbReference type="EMBL" id="AE004439">
    <property type="protein sequence ID" value="AAK03811.1"/>
    <property type="molecule type" value="Genomic_DNA"/>
</dbReference>
<dbReference type="RefSeq" id="WP_010907307.1">
    <property type="nucleotide sequence ID" value="NC_002663.1"/>
</dbReference>
<dbReference type="SMR" id="Q9CK98"/>
<dbReference type="STRING" id="272843.PM1727"/>
<dbReference type="EnsemblBacteria" id="AAK03811">
    <property type="protein sequence ID" value="AAK03811"/>
    <property type="gene ID" value="PM1727"/>
</dbReference>
<dbReference type="KEGG" id="pmu:PM1727"/>
<dbReference type="PATRIC" id="fig|272843.6.peg.1748"/>
<dbReference type="HOGENOM" id="CLU_085077_3_0_6"/>
<dbReference type="OrthoDB" id="9781367at2"/>
<dbReference type="UniPathway" id="UPA00356">
    <property type="reaction ID" value="UER00438"/>
</dbReference>
<dbReference type="UniPathway" id="UPA00958"/>
<dbReference type="Proteomes" id="UP000000809">
    <property type="component" value="Chromosome"/>
</dbReference>
<dbReference type="GO" id="GO:0005737">
    <property type="term" value="C:cytoplasm"/>
    <property type="evidence" value="ECO:0007669"/>
    <property type="project" value="UniProtKB-SubCell"/>
</dbReference>
<dbReference type="GO" id="GO:0034200">
    <property type="term" value="F:D-glycero-beta-D-manno-heptose 1,7-bisphosphate 7-phosphatase activity"/>
    <property type="evidence" value="ECO:0000250"/>
    <property type="project" value="UniProtKB"/>
</dbReference>
<dbReference type="GO" id="GO:0000287">
    <property type="term" value="F:magnesium ion binding"/>
    <property type="evidence" value="ECO:0000250"/>
    <property type="project" value="UniProtKB"/>
</dbReference>
<dbReference type="GO" id="GO:0008270">
    <property type="term" value="F:zinc ion binding"/>
    <property type="evidence" value="ECO:0000250"/>
    <property type="project" value="UniProtKB"/>
</dbReference>
<dbReference type="GO" id="GO:0097171">
    <property type="term" value="P:ADP-L-glycero-beta-D-manno-heptose biosynthetic process"/>
    <property type="evidence" value="ECO:0007669"/>
    <property type="project" value="UniProtKB-UniPathway"/>
</dbReference>
<dbReference type="GO" id="GO:0009244">
    <property type="term" value="P:lipopolysaccharide core region biosynthetic process"/>
    <property type="evidence" value="ECO:0007669"/>
    <property type="project" value="UniProtKB-UniPathway"/>
</dbReference>
<dbReference type="CDD" id="cd07503">
    <property type="entry name" value="HAD_HisB-N"/>
    <property type="match status" value="1"/>
</dbReference>
<dbReference type="FunFam" id="3.40.50.1000:FF:000037">
    <property type="entry name" value="D,D-heptose 1,7-bisphosphate phosphatase"/>
    <property type="match status" value="1"/>
</dbReference>
<dbReference type="Gene3D" id="3.40.50.1000">
    <property type="entry name" value="HAD superfamily/HAD-like"/>
    <property type="match status" value="1"/>
</dbReference>
<dbReference type="InterPro" id="IPR036412">
    <property type="entry name" value="HAD-like_sf"/>
</dbReference>
<dbReference type="InterPro" id="IPR006549">
    <property type="entry name" value="HAD-SF_hydro_IIIA"/>
</dbReference>
<dbReference type="InterPro" id="IPR023214">
    <property type="entry name" value="HAD_sf"/>
</dbReference>
<dbReference type="InterPro" id="IPR004446">
    <property type="entry name" value="Heptose_bisP_phosphatase"/>
</dbReference>
<dbReference type="InterPro" id="IPR006543">
    <property type="entry name" value="Histidinol-phos"/>
</dbReference>
<dbReference type="NCBIfam" id="TIGR00213">
    <property type="entry name" value="GmhB_yaeD"/>
    <property type="match status" value="1"/>
</dbReference>
<dbReference type="NCBIfam" id="TIGR01662">
    <property type="entry name" value="HAD-SF-IIIA"/>
    <property type="match status" value="1"/>
</dbReference>
<dbReference type="NCBIfam" id="TIGR01656">
    <property type="entry name" value="Histidinol-ppas"/>
    <property type="match status" value="1"/>
</dbReference>
<dbReference type="NCBIfam" id="NF006506">
    <property type="entry name" value="PRK08942.1"/>
    <property type="match status" value="1"/>
</dbReference>
<dbReference type="PANTHER" id="PTHR42891">
    <property type="entry name" value="D-GLYCERO-BETA-D-MANNO-HEPTOSE-1,7-BISPHOSPHATE 7-PHOSPHATASE"/>
    <property type="match status" value="1"/>
</dbReference>
<dbReference type="PANTHER" id="PTHR42891:SF1">
    <property type="entry name" value="D-GLYCERO-BETA-D-MANNO-HEPTOSE-1,7-BISPHOSPHATE 7-PHOSPHATASE"/>
    <property type="match status" value="1"/>
</dbReference>
<dbReference type="Pfam" id="PF13242">
    <property type="entry name" value="Hydrolase_like"/>
    <property type="match status" value="1"/>
</dbReference>
<dbReference type="PIRSF" id="PIRSF004682">
    <property type="entry name" value="GmhB"/>
    <property type="match status" value="1"/>
</dbReference>
<dbReference type="SUPFAM" id="SSF56784">
    <property type="entry name" value="HAD-like"/>
    <property type="match status" value="1"/>
</dbReference>
<reference key="1">
    <citation type="journal article" date="2001" name="Proc. Natl. Acad. Sci. U.S.A.">
        <title>Complete genomic sequence of Pasteurella multocida Pm70.</title>
        <authorList>
            <person name="May B.J."/>
            <person name="Zhang Q."/>
            <person name="Li L.L."/>
            <person name="Paustian M.L."/>
            <person name="Whittam T.S."/>
            <person name="Kapur V."/>
        </authorList>
    </citation>
    <scope>NUCLEOTIDE SEQUENCE [LARGE SCALE GENOMIC DNA]</scope>
    <source>
        <strain>Pm70</strain>
    </source>
</reference>
<evidence type="ECO:0000250" key="1"/>
<evidence type="ECO:0000250" key="2">
    <source>
        <dbReference type="UniProtKB" id="Q7WG29"/>
    </source>
</evidence>
<evidence type="ECO:0000305" key="3"/>
<gene>
    <name type="primary">gmhB</name>
    <name type="ordered locus">PM1727</name>
</gene>
<protein>
    <recommendedName>
        <fullName>D-glycero-beta-D-manno-heptose-1,7-bisphosphate 7-phosphatase</fullName>
        <ecNumber>3.1.3.82</ecNumber>
    </recommendedName>
    <alternativeName>
        <fullName>D,D-heptose 1,7-bisphosphate phosphatase</fullName>
        <shortName>HBP phosphatase</shortName>
    </alternativeName>
</protein>
<name>GMHBB_PASMU</name>
<comment type="function">
    <text evidence="1">Converts the D-glycero-beta-D-manno-heptose 1,7-bisphosphate intermediate into D-glycero-beta-D-manno-heptose 1-phosphate by removing the phosphate group at the C-7 position.</text>
</comment>
<comment type="catalytic activity">
    <reaction>
        <text>D-glycero-beta-D-manno-heptose 1,7-bisphosphate + H2O = D-glycero-beta-D-manno-heptose 1-phosphate + phosphate</text>
        <dbReference type="Rhea" id="RHEA:28518"/>
        <dbReference type="ChEBI" id="CHEBI:15377"/>
        <dbReference type="ChEBI" id="CHEBI:43474"/>
        <dbReference type="ChEBI" id="CHEBI:60208"/>
        <dbReference type="ChEBI" id="CHEBI:61593"/>
        <dbReference type="EC" id="3.1.3.82"/>
    </reaction>
</comment>
<comment type="cofactor">
    <cofactor evidence="1">
        <name>Mg(2+)</name>
        <dbReference type="ChEBI" id="CHEBI:18420"/>
    </cofactor>
</comment>
<comment type="cofactor">
    <cofactor evidence="1">
        <name>Zn(2+)</name>
        <dbReference type="ChEBI" id="CHEBI:29105"/>
    </cofactor>
</comment>
<comment type="pathway">
    <text>Nucleotide-sugar biosynthesis; ADP-L-glycero-beta-D-manno-heptose biosynthesis; ADP-L-glycero-beta-D-manno-heptose from D-glycero-beta-D-manno-heptose 7-phosphate: step 2/4.</text>
</comment>
<comment type="pathway">
    <text>Bacterial outer membrane biogenesis; LPS core biosynthesis.</text>
</comment>
<comment type="subunit">
    <text evidence="1">Monomer.</text>
</comment>
<comment type="subcellular location">
    <subcellularLocation>
        <location evidence="1">Cytoplasm</location>
    </subcellularLocation>
</comment>
<comment type="similarity">
    <text evidence="3">Belongs to the GmhB family.</text>
</comment>